<name>LIPA1_TRYCC</name>
<reference key="1">
    <citation type="journal article" date="2005" name="Science">
        <title>The genome sequence of Trypanosoma cruzi, etiologic agent of Chagas disease.</title>
        <authorList>
            <person name="El-Sayed N.M.A."/>
            <person name="Myler P.J."/>
            <person name="Bartholomeu D.C."/>
            <person name="Nilsson D."/>
            <person name="Aggarwal G."/>
            <person name="Tran A.-N."/>
            <person name="Ghedin E."/>
            <person name="Worthey E.A."/>
            <person name="Delcher A.L."/>
            <person name="Blandin G."/>
            <person name="Westenberger S.J."/>
            <person name="Caler E."/>
            <person name="Cerqueira G.C."/>
            <person name="Branche C."/>
            <person name="Haas B."/>
            <person name="Anupama A."/>
            <person name="Arner E."/>
            <person name="Aslund L."/>
            <person name="Attipoe P."/>
            <person name="Bontempi E."/>
            <person name="Bringaud F."/>
            <person name="Burton P."/>
            <person name="Cadag E."/>
            <person name="Campbell D.A."/>
            <person name="Carrington M."/>
            <person name="Crabtree J."/>
            <person name="Darban H."/>
            <person name="da Silveira J.F."/>
            <person name="de Jong P."/>
            <person name="Edwards K."/>
            <person name="Englund P.T."/>
            <person name="Fazelina G."/>
            <person name="Feldblyum T."/>
            <person name="Ferella M."/>
            <person name="Frasch A.C."/>
            <person name="Gull K."/>
            <person name="Horn D."/>
            <person name="Hou L."/>
            <person name="Huang Y."/>
            <person name="Kindlund E."/>
            <person name="Klingbeil M."/>
            <person name="Kluge S."/>
            <person name="Koo H."/>
            <person name="Lacerda D."/>
            <person name="Levin M.J."/>
            <person name="Lorenzi H."/>
            <person name="Louie T."/>
            <person name="Machado C.R."/>
            <person name="McCulloch R."/>
            <person name="McKenna A."/>
            <person name="Mizuno Y."/>
            <person name="Mottram J.C."/>
            <person name="Nelson S."/>
            <person name="Ochaya S."/>
            <person name="Osoegawa K."/>
            <person name="Pai G."/>
            <person name="Parsons M."/>
            <person name="Pentony M."/>
            <person name="Pettersson U."/>
            <person name="Pop M."/>
            <person name="Ramirez J.L."/>
            <person name="Rinta J."/>
            <person name="Robertson L."/>
            <person name="Salzberg S.L."/>
            <person name="Sanchez D.O."/>
            <person name="Seyler A."/>
            <person name="Sharma R."/>
            <person name="Shetty J."/>
            <person name="Simpson A.J."/>
            <person name="Sisk E."/>
            <person name="Tammi M.T."/>
            <person name="Tarleton R."/>
            <person name="Teixeira S."/>
            <person name="Van Aken S."/>
            <person name="Vogt C."/>
            <person name="Ward P.N."/>
            <person name="Wickstead B."/>
            <person name="Wortman J."/>
            <person name="White O."/>
            <person name="Fraser C.M."/>
            <person name="Stuart K.D."/>
            <person name="Andersson B."/>
        </authorList>
    </citation>
    <scope>NUCLEOTIDE SEQUENCE [LARGE SCALE GENOMIC DNA]</scope>
    <source>
        <strain>CL Brener</strain>
    </source>
</reference>
<accession>Q4DC43</accession>
<proteinExistence type="inferred from homology"/>
<keyword id="KW-0004">4Fe-4S</keyword>
<keyword id="KW-0408">Iron</keyword>
<keyword id="KW-0411">Iron-sulfur</keyword>
<keyword id="KW-0479">Metal-binding</keyword>
<keyword id="KW-0496">Mitochondrion</keyword>
<keyword id="KW-1185">Reference proteome</keyword>
<keyword id="KW-0949">S-adenosyl-L-methionine</keyword>
<keyword id="KW-0808">Transferase</keyword>
<comment type="function">
    <text evidence="1">Catalyzes the radical-mediated insertion of two sulfur atoms into the C-6 and C-8 positions of the octanoyl moiety bound to the lipoyl domains of lipoate-dependent enzymes, thereby converting the octanoylated domains into lipoylated derivatives.</text>
</comment>
<comment type="catalytic activity">
    <reaction evidence="1">
        <text>[[Fe-S] cluster scaffold protein carrying a second [4Fe-4S](2+) cluster] + N(6)-octanoyl-L-lysyl-[protein] + 2 oxidized [2Fe-2S]-[ferredoxin] + 2 S-adenosyl-L-methionine + 4 H(+) = [[Fe-S] cluster scaffold protein] + N(6)-[(R)-dihydrolipoyl]-L-lysyl-[protein] + 4 Fe(3+) + 2 hydrogen sulfide + 2 5'-deoxyadenosine + 2 L-methionine + 2 reduced [2Fe-2S]-[ferredoxin]</text>
        <dbReference type="Rhea" id="RHEA:16585"/>
        <dbReference type="Rhea" id="RHEA-COMP:9928"/>
        <dbReference type="Rhea" id="RHEA-COMP:10000"/>
        <dbReference type="Rhea" id="RHEA-COMP:10001"/>
        <dbReference type="Rhea" id="RHEA-COMP:10475"/>
        <dbReference type="Rhea" id="RHEA-COMP:14568"/>
        <dbReference type="Rhea" id="RHEA-COMP:14569"/>
        <dbReference type="ChEBI" id="CHEBI:15378"/>
        <dbReference type="ChEBI" id="CHEBI:17319"/>
        <dbReference type="ChEBI" id="CHEBI:29034"/>
        <dbReference type="ChEBI" id="CHEBI:29919"/>
        <dbReference type="ChEBI" id="CHEBI:33722"/>
        <dbReference type="ChEBI" id="CHEBI:33737"/>
        <dbReference type="ChEBI" id="CHEBI:33738"/>
        <dbReference type="ChEBI" id="CHEBI:57844"/>
        <dbReference type="ChEBI" id="CHEBI:59789"/>
        <dbReference type="ChEBI" id="CHEBI:78809"/>
        <dbReference type="ChEBI" id="CHEBI:83100"/>
        <dbReference type="EC" id="2.8.1.8"/>
    </reaction>
</comment>
<comment type="cofactor">
    <cofactor evidence="1">
        <name>[4Fe-4S] cluster</name>
        <dbReference type="ChEBI" id="CHEBI:49883"/>
    </cofactor>
    <text evidence="1">Binds 2 [4Fe-4S] clusters per subunit. One cluster is coordinated with 3 cysteines and an exchangeable S-adenosyl-L-methionine.</text>
</comment>
<comment type="pathway">
    <text evidence="1">Protein modification; protein lipoylation via endogenous pathway; protein N(6)-(lipoyl)lysine from octanoyl-[acyl-carrier-protein]: step 2/2.</text>
</comment>
<comment type="subcellular location">
    <subcellularLocation>
        <location evidence="1">Mitochondrion</location>
    </subcellularLocation>
</comment>
<comment type="miscellaneous">
    <text evidence="1">This protein may be expected to contain an N-terminal transit peptide but none has been predicted.</text>
</comment>
<comment type="similarity">
    <text evidence="1">Belongs to the radical SAM superfamily. Lipoyl synthase family.</text>
</comment>
<gene>
    <name type="ORF">Tc00.1047053511291.30</name>
</gene>
<dbReference type="EC" id="2.8.1.8" evidence="1"/>
<dbReference type="EMBL" id="AAHK01000671">
    <property type="protein sequence ID" value="EAN90088.1"/>
    <property type="molecule type" value="Genomic_DNA"/>
</dbReference>
<dbReference type="RefSeq" id="XP_811939.1">
    <property type="nucleotide sequence ID" value="XM_806846.1"/>
</dbReference>
<dbReference type="SMR" id="Q4DC43"/>
<dbReference type="FunCoup" id="Q4DC43">
    <property type="interactions" value="334"/>
</dbReference>
<dbReference type="STRING" id="353153.Q4DC43"/>
<dbReference type="PaxDb" id="353153-Q4DC43"/>
<dbReference type="EnsemblProtists" id="EAN90088">
    <property type="protein sequence ID" value="EAN90088"/>
    <property type="gene ID" value="Tc00.1047053511291.30"/>
</dbReference>
<dbReference type="GeneID" id="3543008"/>
<dbReference type="KEGG" id="tcr:511291.30"/>
<dbReference type="eggNOG" id="KOG2672">
    <property type="taxonomic scope" value="Eukaryota"/>
</dbReference>
<dbReference type="InParanoid" id="Q4DC43"/>
<dbReference type="OMA" id="LKVLMMA"/>
<dbReference type="UniPathway" id="UPA00538">
    <property type="reaction ID" value="UER00593"/>
</dbReference>
<dbReference type="Proteomes" id="UP000002296">
    <property type="component" value="Unassembled WGS sequence"/>
</dbReference>
<dbReference type="GO" id="GO:0005739">
    <property type="term" value="C:mitochondrion"/>
    <property type="evidence" value="ECO:0007669"/>
    <property type="project" value="UniProtKB-SubCell"/>
</dbReference>
<dbReference type="GO" id="GO:0051539">
    <property type="term" value="F:4 iron, 4 sulfur cluster binding"/>
    <property type="evidence" value="ECO:0007669"/>
    <property type="project" value="UniProtKB-UniRule"/>
</dbReference>
<dbReference type="GO" id="GO:0016992">
    <property type="term" value="F:lipoate synthase activity"/>
    <property type="evidence" value="ECO:0007669"/>
    <property type="project" value="UniProtKB-UniRule"/>
</dbReference>
<dbReference type="GO" id="GO:0046872">
    <property type="term" value="F:metal ion binding"/>
    <property type="evidence" value="ECO:0007669"/>
    <property type="project" value="UniProtKB-KW"/>
</dbReference>
<dbReference type="CDD" id="cd01335">
    <property type="entry name" value="Radical_SAM"/>
    <property type="match status" value="1"/>
</dbReference>
<dbReference type="FunFam" id="3.20.20.70:FF:000306">
    <property type="entry name" value="Lipoyl synthase, mitochondrial"/>
    <property type="match status" value="1"/>
</dbReference>
<dbReference type="Gene3D" id="3.20.20.70">
    <property type="entry name" value="Aldolase class I"/>
    <property type="match status" value="1"/>
</dbReference>
<dbReference type="HAMAP" id="MF_00206">
    <property type="entry name" value="Lipoyl_synth"/>
    <property type="match status" value="1"/>
</dbReference>
<dbReference type="InterPro" id="IPR013785">
    <property type="entry name" value="Aldolase_TIM"/>
</dbReference>
<dbReference type="InterPro" id="IPR006638">
    <property type="entry name" value="Elp3/MiaA/NifB-like_rSAM"/>
</dbReference>
<dbReference type="InterPro" id="IPR031691">
    <property type="entry name" value="LIAS_N"/>
</dbReference>
<dbReference type="InterPro" id="IPR003698">
    <property type="entry name" value="Lipoyl_synth"/>
</dbReference>
<dbReference type="InterPro" id="IPR007197">
    <property type="entry name" value="rSAM"/>
</dbReference>
<dbReference type="NCBIfam" id="TIGR00510">
    <property type="entry name" value="lipA"/>
    <property type="match status" value="1"/>
</dbReference>
<dbReference type="NCBIfam" id="NF004019">
    <property type="entry name" value="PRK05481.1"/>
    <property type="match status" value="1"/>
</dbReference>
<dbReference type="NCBIfam" id="NF009544">
    <property type="entry name" value="PRK12928.1"/>
    <property type="match status" value="1"/>
</dbReference>
<dbReference type="PANTHER" id="PTHR10949">
    <property type="entry name" value="LIPOYL SYNTHASE"/>
    <property type="match status" value="1"/>
</dbReference>
<dbReference type="PANTHER" id="PTHR10949:SF0">
    <property type="entry name" value="LIPOYL SYNTHASE, MITOCHONDRIAL"/>
    <property type="match status" value="1"/>
</dbReference>
<dbReference type="Pfam" id="PF16881">
    <property type="entry name" value="LIAS_N"/>
    <property type="match status" value="1"/>
</dbReference>
<dbReference type="Pfam" id="PF04055">
    <property type="entry name" value="Radical_SAM"/>
    <property type="match status" value="1"/>
</dbReference>
<dbReference type="SFLD" id="SFLDF00271">
    <property type="entry name" value="lipoyl_synthase"/>
    <property type="match status" value="1"/>
</dbReference>
<dbReference type="SFLD" id="SFLDG01058">
    <property type="entry name" value="lipoyl_synthase_like"/>
    <property type="match status" value="1"/>
</dbReference>
<dbReference type="SMART" id="SM00729">
    <property type="entry name" value="Elp3"/>
    <property type="match status" value="1"/>
</dbReference>
<dbReference type="SUPFAM" id="SSF102114">
    <property type="entry name" value="Radical SAM enzymes"/>
    <property type="match status" value="1"/>
</dbReference>
<dbReference type="PROSITE" id="PS51918">
    <property type="entry name" value="RADICAL_SAM"/>
    <property type="match status" value="1"/>
</dbReference>
<protein>
    <recommendedName>
        <fullName>Lipoyl synthase 1, mitochondrial</fullName>
        <ecNumber evidence="1">2.8.1.8</ecNumber>
    </recommendedName>
    <alternativeName>
        <fullName evidence="1">Lipoate synthase 1</fullName>
        <shortName evidence="1">LS 1</shortName>
        <shortName evidence="1">Lip-syn 1</shortName>
    </alternativeName>
    <alternativeName>
        <fullName evidence="1">Lipoic acid synthase 1</fullName>
    </alternativeName>
</protein>
<sequence length="423" mass="46531">MFHRHLCKLCSKTPSAATLASPLGKLQEERGEGVAKDLKKDKQHRQIFLQKFRERLDSDTTGKNTLAGFIDLPEGISPTMAAVGPLKRGEEPLPPWLKMKVAKGVSRLPRFNSIRKSMREKRLATVCEEAKCPNIGECWGGDEEEGTATATIMVMGSHCTRGCRFCSVLTSRTPPPLDPDEPQKVANAVAEMGVDYIVMTMVDRDDLNDGGAAHVVRCVNAIKEKNPLLLLEALVGDFHGDLKLVETVALSPLSVYAHNIECVERITPNVRDRRASYRQSLKVLEHVNSFTKGAMLTKSSIMLGLGEKEEEVRQTLRDLRTAGVSAVTLGQYLQPARTRLKVSRYAHPKEFQMWEEEAMAMGFLYCASGPLVRSSYRAGEYYIKSLVKQRGAAATKSNTTTTTTNTASLAAATVTDSATLQGE</sequence>
<evidence type="ECO:0000255" key="1">
    <source>
        <dbReference type="HAMAP-Rule" id="MF_03123"/>
    </source>
</evidence>
<evidence type="ECO:0000255" key="2">
    <source>
        <dbReference type="PROSITE-ProRule" id="PRU01266"/>
    </source>
</evidence>
<feature type="chain" id="PRO_0000398241" description="Lipoyl synthase 1, mitochondrial">
    <location>
        <begin position="1"/>
        <end position="423"/>
    </location>
</feature>
<feature type="domain" description="Radical SAM core" evidence="2">
    <location>
        <begin position="142"/>
        <end position="364"/>
    </location>
</feature>
<feature type="binding site" evidence="1">
    <location>
        <position position="127"/>
    </location>
    <ligand>
        <name>[4Fe-4S] cluster</name>
        <dbReference type="ChEBI" id="CHEBI:49883"/>
        <label>1</label>
    </ligand>
</feature>
<feature type="binding site" evidence="1">
    <location>
        <position position="132"/>
    </location>
    <ligand>
        <name>[4Fe-4S] cluster</name>
        <dbReference type="ChEBI" id="CHEBI:49883"/>
        <label>1</label>
    </ligand>
</feature>
<feature type="binding site" evidence="1">
    <location>
        <position position="138"/>
    </location>
    <ligand>
        <name>[4Fe-4S] cluster</name>
        <dbReference type="ChEBI" id="CHEBI:49883"/>
        <label>1</label>
    </ligand>
</feature>
<feature type="binding site" evidence="1">
    <location>
        <position position="159"/>
    </location>
    <ligand>
        <name>[4Fe-4S] cluster</name>
        <dbReference type="ChEBI" id="CHEBI:49883"/>
        <label>2</label>
        <note>4Fe-4S-S-AdoMet</note>
    </ligand>
</feature>
<feature type="binding site" evidence="1">
    <location>
        <position position="163"/>
    </location>
    <ligand>
        <name>[4Fe-4S] cluster</name>
        <dbReference type="ChEBI" id="CHEBI:49883"/>
        <label>2</label>
        <note>4Fe-4S-S-AdoMet</note>
    </ligand>
</feature>
<feature type="binding site" evidence="1">
    <location>
        <position position="166"/>
    </location>
    <ligand>
        <name>[4Fe-4S] cluster</name>
        <dbReference type="ChEBI" id="CHEBI:49883"/>
        <label>2</label>
        <note>4Fe-4S-S-AdoMet</note>
    </ligand>
</feature>
<feature type="binding site" evidence="1">
    <location>
        <position position="375"/>
    </location>
    <ligand>
        <name>[4Fe-4S] cluster</name>
        <dbReference type="ChEBI" id="CHEBI:49883"/>
        <label>1</label>
    </ligand>
</feature>
<organism>
    <name type="scientific">Trypanosoma cruzi (strain CL Brener)</name>
    <dbReference type="NCBI Taxonomy" id="353153"/>
    <lineage>
        <taxon>Eukaryota</taxon>
        <taxon>Discoba</taxon>
        <taxon>Euglenozoa</taxon>
        <taxon>Kinetoplastea</taxon>
        <taxon>Metakinetoplastina</taxon>
        <taxon>Trypanosomatida</taxon>
        <taxon>Trypanosomatidae</taxon>
        <taxon>Trypanosoma</taxon>
        <taxon>Schizotrypanum</taxon>
    </lineage>
</organism>